<feature type="chain" id="PRO_0000177131" description="Large ribosomal subunit protein bL20">
    <location>
        <begin position="1"/>
        <end position="134"/>
    </location>
</feature>
<name>RL20_BRUSU</name>
<accession>P66102</accession>
<accession>G0K968</accession>
<accession>Q8YE71</accession>
<dbReference type="EMBL" id="AE014291">
    <property type="protein sequence ID" value="AAN31010.1"/>
    <property type="molecule type" value="Genomic_DNA"/>
</dbReference>
<dbReference type="EMBL" id="CP002997">
    <property type="protein sequence ID" value="AEM19427.1"/>
    <property type="molecule type" value="Genomic_DNA"/>
</dbReference>
<dbReference type="RefSeq" id="WP_002965185.1">
    <property type="nucleotide sequence ID" value="NZ_KN046804.1"/>
</dbReference>
<dbReference type="SMR" id="P66102"/>
<dbReference type="GeneID" id="97534622"/>
<dbReference type="KEGG" id="bms:BR2120"/>
<dbReference type="KEGG" id="bsi:BS1330_I2114"/>
<dbReference type="PATRIC" id="fig|204722.21.peg.695"/>
<dbReference type="HOGENOM" id="CLU_123265_0_1_5"/>
<dbReference type="PhylomeDB" id="P66102"/>
<dbReference type="Proteomes" id="UP000007104">
    <property type="component" value="Chromosome I"/>
</dbReference>
<dbReference type="GO" id="GO:1990904">
    <property type="term" value="C:ribonucleoprotein complex"/>
    <property type="evidence" value="ECO:0007669"/>
    <property type="project" value="UniProtKB-KW"/>
</dbReference>
<dbReference type="GO" id="GO:0005840">
    <property type="term" value="C:ribosome"/>
    <property type="evidence" value="ECO:0007669"/>
    <property type="project" value="UniProtKB-KW"/>
</dbReference>
<dbReference type="GO" id="GO:0019843">
    <property type="term" value="F:rRNA binding"/>
    <property type="evidence" value="ECO:0007669"/>
    <property type="project" value="UniProtKB-UniRule"/>
</dbReference>
<dbReference type="GO" id="GO:0003735">
    <property type="term" value="F:structural constituent of ribosome"/>
    <property type="evidence" value="ECO:0007669"/>
    <property type="project" value="InterPro"/>
</dbReference>
<dbReference type="GO" id="GO:0000027">
    <property type="term" value="P:ribosomal large subunit assembly"/>
    <property type="evidence" value="ECO:0007669"/>
    <property type="project" value="UniProtKB-UniRule"/>
</dbReference>
<dbReference type="GO" id="GO:0006412">
    <property type="term" value="P:translation"/>
    <property type="evidence" value="ECO:0007669"/>
    <property type="project" value="InterPro"/>
</dbReference>
<dbReference type="CDD" id="cd07026">
    <property type="entry name" value="Ribosomal_L20"/>
    <property type="match status" value="1"/>
</dbReference>
<dbReference type="FunFam" id="1.10.1900.20:FF:000001">
    <property type="entry name" value="50S ribosomal protein L20"/>
    <property type="match status" value="1"/>
</dbReference>
<dbReference type="Gene3D" id="6.10.160.10">
    <property type="match status" value="1"/>
</dbReference>
<dbReference type="Gene3D" id="1.10.1900.20">
    <property type="entry name" value="Ribosomal protein L20"/>
    <property type="match status" value="1"/>
</dbReference>
<dbReference type="HAMAP" id="MF_00382">
    <property type="entry name" value="Ribosomal_bL20"/>
    <property type="match status" value="1"/>
</dbReference>
<dbReference type="InterPro" id="IPR005813">
    <property type="entry name" value="Ribosomal_bL20"/>
</dbReference>
<dbReference type="InterPro" id="IPR049946">
    <property type="entry name" value="RIBOSOMAL_L20_CS"/>
</dbReference>
<dbReference type="InterPro" id="IPR035566">
    <property type="entry name" value="Ribosomal_protein_bL20_C"/>
</dbReference>
<dbReference type="NCBIfam" id="TIGR01032">
    <property type="entry name" value="rplT_bact"/>
    <property type="match status" value="1"/>
</dbReference>
<dbReference type="PANTHER" id="PTHR10986">
    <property type="entry name" value="39S RIBOSOMAL PROTEIN L20"/>
    <property type="match status" value="1"/>
</dbReference>
<dbReference type="Pfam" id="PF00453">
    <property type="entry name" value="Ribosomal_L20"/>
    <property type="match status" value="1"/>
</dbReference>
<dbReference type="PRINTS" id="PR00062">
    <property type="entry name" value="RIBOSOMALL20"/>
</dbReference>
<dbReference type="SUPFAM" id="SSF74731">
    <property type="entry name" value="Ribosomal protein L20"/>
    <property type="match status" value="1"/>
</dbReference>
<dbReference type="PROSITE" id="PS00937">
    <property type="entry name" value="RIBOSOMAL_L20"/>
    <property type="match status" value="1"/>
</dbReference>
<organism>
    <name type="scientific">Brucella suis biovar 1 (strain 1330)</name>
    <dbReference type="NCBI Taxonomy" id="204722"/>
    <lineage>
        <taxon>Bacteria</taxon>
        <taxon>Pseudomonadati</taxon>
        <taxon>Pseudomonadota</taxon>
        <taxon>Alphaproteobacteria</taxon>
        <taxon>Hyphomicrobiales</taxon>
        <taxon>Brucellaceae</taxon>
        <taxon>Brucella/Ochrobactrum group</taxon>
        <taxon>Brucella</taxon>
    </lineage>
</organism>
<protein>
    <recommendedName>
        <fullName evidence="1">Large ribosomal subunit protein bL20</fullName>
    </recommendedName>
    <alternativeName>
        <fullName evidence="2">50S ribosomal protein L20</fullName>
    </alternativeName>
</protein>
<keyword id="KW-0687">Ribonucleoprotein</keyword>
<keyword id="KW-0689">Ribosomal protein</keyword>
<keyword id="KW-0694">RNA-binding</keyword>
<keyword id="KW-0699">rRNA-binding</keyword>
<gene>
    <name evidence="1" type="primary">rplT</name>
    <name type="ordered locus">BR2120</name>
    <name type="ordered locus">BS1330_I2114</name>
</gene>
<proteinExistence type="inferred from homology"/>
<comment type="function">
    <text evidence="1">Binds directly to 23S ribosomal RNA and is necessary for the in vitro assembly process of the 50S ribosomal subunit. It is not involved in the protein synthesizing functions of that subunit.</text>
</comment>
<comment type="similarity">
    <text evidence="1">Belongs to the bacterial ribosomal protein bL20 family.</text>
</comment>
<evidence type="ECO:0000255" key="1">
    <source>
        <dbReference type="HAMAP-Rule" id="MF_00382"/>
    </source>
</evidence>
<evidence type="ECO:0000305" key="2"/>
<reference key="1">
    <citation type="journal article" date="2002" name="Proc. Natl. Acad. Sci. U.S.A.">
        <title>The Brucella suis genome reveals fundamental similarities between animal and plant pathogens and symbionts.</title>
        <authorList>
            <person name="Paulsen I.T."/>
            <person name="Seshadri R."/>
            <person name="Nelson K.E."/>
            <person name="Eisen J.A."/>
            <person name="Heidelberg J.F."/>
            <person name="Read T.D."/>
            <person name="Dodson R.J."/>
            <person name="Umayam L.A."/>
            <person name="Brinkac L.M."/>
            <person name="Beanan M.J."/>
            <person name="Daugherty S.C."/>
            <person name="DeBoy R.T."/>
            <person name="Durkin A.S."/>
            <person name="Kolonay J.F."/>
            <person name="Madupu R."/>
            <person name="Nelson W.C."/>
            <person name="Ayodeji B."/>
            <person name="Kraul M."/>
            <person name="Shetty J."/>
            <person name="Malek J.A."/>
            <person name="Van Aken S.E."/>
            <person name="Riedmuller S."/>
            <person name="Tettelin H."/>
            <person name="Gill S.R."/>
            <person name="White O."/>
            <person name="Salzberg S.L."/>
            <person name="Hoover D.L."/>
            <person name="Lindler L.E."/>
            <person name="Halling S.M."/>
            <person name="Boyle S.M."/>
            <person name="Fraser C.M."/>
        </authorList>
    </citation>
    <scope>NUCLEOTIDE SEQUENCE [LARGE SCALE GENOMIC DNA]</scope>
    <source>
        <strain>1330</strain>
    </source>
</reference>
<reference key="2">
    <citation type="journal article" date="2011" name="J. Bacteriol.">
        <title>Revised genome sequence of Brucella suis 1330.</title>
        <authorList>
            <person name="Tae H."/>
            <person name="Shallom S."/>
            <person name="Settlage R."/>
            <person name="Preston D."/>
            <person name="Adams L.G."/>
            <person name="Garner H.R."/>
        </authorList>
    </citation>
    <scope>NUCLEOTIDE SEQUENCE [LARGE SCALE GENOMIC DNA]</scope>
    <source>
        <strain>1330</strain>
    </source>
</reference>
<sequence>MARVKRGVTAHAKHKKVLDQAAGFRGRRKNTIRTAKAAVDRSKQYAYRDRKNRKRSFRALWIQRINAAVREQGLTYGRFIDGLAKAGIEIDRKVLSDIAIHEPEAFAALVASAKKALEYLKNTSMPNAFEGAVR</sequence>